<organism>
    <name type="scientific">Yersinia enterocolitica serotype O:8 / biotype 1B (strain NCTC 13174 / 8081)</name>
    <dbReference type="NCBI Taxonomy" id="393305"/>
    <lineage>
        <taxon>Bacteria</taxon>
        <taxon>Pseudomonadati</taxon>
        <taxon>Pseudomonadota</taxon>
        <taxon>Gammaproteobacteria</taxon>
        <taxon>Enterobacterales</taxon>
        <taxon>Yersiniaceae</taxon>
        <taxon>Yersinia</taxon>
    </lineage>
</organism>
<feature type="chain" id="PRO_0000331185" description="Spermidine export protein MdtJ">
    <location>
        <begin position="1"/>
        <end position="126"/>
    </location>
</feature>
<feature type="transmembrane region" description="Helical" evidence="1">
    <location>
        <begin position="1"/>
        <end position="21"/>
    </location>
</feature>
<feature type="transmembrane region" description="Helical" evidence="1">
    <location>
        <begin position="32"/>
        <end position="52"/>
    </location>
</feature>
<feature type="transmembrane region" description="Helical" evidence="1">
    <location>
        <begin position="55"/>
        <end position="75"/>
    </location>
</feature>
<feature type="transmembrane region" description="Helical" evidence="1">
    <location>
        <begin position="82"/>
        <end position="102"/>
    </location>
</feature>
<feature type="region of interest" description="Disordered" evidence="2">
    <location>
        <begin position="104"/>
        <end position="126"/>
    </location>
</feature>
<name>MDTJ_YERE8</name>
<accession>A1JRE8</accession>
<comment type="function">
    <text evidence="1">Catalyzes the excretion of spermidine.</text>
</comment>
<comment type="subunit">
    <text evidence="1">Forms a complex with MdtI.</text>
</comment>
<comment type="subcellular location">
    <subcellularLocation>
        <location evidence="1">Cell inner membrane</location>
        <topology evidence="1">Multi-pass membrane protein</topology>
    </subcellularLocation>
</comment>
<comment type="similarity">
    <text evidence="1">Belongs to the drug/metabolite transporter (DMT) superfamily. Small multidrug resistance (SMR) (TC 2.A.7.1) family. MdtJ subfamily.</text>
</comment>
<evidence type="ECO:0000255" key="1">
    <source>
        <dbReference type="HAMAP-Rule" id="MF_01598"/>
    </source>
</evidence>
<evidence type="ECO:0000256" key="2">
    <source>
        <dbReference type="SAM" id="MobiDB-lite"/>
    </source>
</evidence>
<dbReference type="EMBL" id="AM286415">
    <property type="protein sequence ID" value="CAL12433.1"/>
    <property type="molecule type" value="Genomic_DNA"/>
</dbReference>
<dbReference type="RefSeq" id="YP_001006600.1">
    <property type="nucleotide sequence ID" value="NC_008800.1"/>
</dbReference>
<dbReference type="SMR" id="A1JRE8"/>
<dbReference type="KEGG" id="yen:YE2381"/>
<dbReference type="PATRIC" id="fig|393305.7.peg.2535"/>
<dbReference type="eggNOG" id="COG2076">
    <property type="taxonomic scope" value="Bacteria"/>
</dbReference>
<dbReference type="HOGENOM" id="CLU_133067_0_0_6"/>
<dbReference type="OrthoDB" id="9808638at2"/>
<dbReference type="Proteomes" id="UP000000642">
    <property type="component" value="Chromosome"/>
</dbReference>
<dbReference type="GO" id="GO:0005886">
    <property type="term" value="C:plasma membrane"/>
    <property type="evidence" value="ECO:0007669"/>
    <property type="project" value="UniProtKB-SubCell"/>
</dbReference>
<dbReference type="GO" id="GO:0015199">
    <property type="term" value="F:amino-acid betaine transmembrane transporter activity"/>
    <property type="evidence" value="ECO:0007669"/>
    <property type="project" value="TreeGrafter"/>
</dbReference>
<dbReference type="GO" id="GO:0015297">
    <property type="term" value="F:antiporter activity"/>
    <property type="evidence" value="ECO:0007669"/>
    <property type="project" value="TreeGrafter"/>
</dbReference>
<dbReference type="GO" id="GO:0015220">
    <property type="term" value="F:choline transmembrane transporter activity"/>
    <property type="evidence" value="ECO:0007669"/>
    <property type="project" value="TreeGrafter"/>
</dbReference>
<dbReference type="GO" id="GO:0015606">
    <property type="term" value="F:spermidine transmembrane transporter activity"/>
    <property type="evidence" value="ECO:0007669"/>
    <property type="project" value="UniProtKB-UniRule"/>
</dbReference>
<dbReference type="GO" id="GO:0031460">
    <property type="term" value="P:glycine betaine transport"/>
    <property type="evidence" value="ECO:0007669"/>
    <property type="project" value="TreeGrafter"/>
</dbReference>
<dbReference type="FunFam" id="1.10.3730.20:FF:000001">
    <property type="entry name" value="Quaternary ammonium compound resistance transporter SugE"/>
    <property type="match status" value="1"/>
</dbReference>
<dbReference type="Gene3D" id="1.10.3730.20">
    <property type="match status" value="1"/>
</dbReference>
<dbReference type="HAMAP" id="MF_01598">
    <property type="entry name" value="MdtJ"/>
    <property type="match status" value="1"/>
</dbReference>
<dbReference type="InterPro" id="IPR000390">
    <property type="entry name" value="Small_drug/metabolite_transptr"/>
</dbReference>
<dbReference type="InterPro" id="IPR045324">
    <property type="entry name" value="Small_multidrug_res"/>
</dbReference>
<dbReference type="InterPro" id="IPR023740">
    <property type="entry name" value="Spermidine_export_MdtJ"/>
</dbReference>
<dbReference type="NCBIfam" id="NF007767">
    <property type="entry name" value="PRK10452.1"/>
    <property type="match status" value="1"/>
</dbReference>
<dbReference type="PANTHER" id="PTHR30561">
    <property type="entry name" value="SMR FAMILY PROTON-DEPENDENT DRUG EFFLUX TRANSPORTER SUGE"/>
    <property type="match status" value="1"/>
</dbReference>
<dbReference type="PANTHER" id="PTHR30561:SF2">
    <property type="entry name" value="SPERMIDINE EXPORT PROTEIN MDTJ"/>
    <property type="match status" value="1"/>
</dbReference>
<dbReference type="Pfam" id="PF00893">
    <property type="entry name" value="Multi_Drug_Res"/>
    <property type="match status" value="1"/>
</dbReference>
<dbReference type="SUPFAM" id="SSF103481">
    <property type="entry name" value="Multidrug resistance efflux transporter EmrE"/>
    <property type="match status" value="1"/>
</dbReference>
<reference key="1">
    <citation type="journal article" date="2006" name="PLoS Genet.">
        <title>The complete genome sequence and comparative genome analysis of the high pathogenicity Yersinia enterocolitica strain 8081.</title>
        <authorList>
            <person name="Thomson N.R."/>
            <person name="Howard S."/>
            <person name="Wren B.W."/>
            <person name="Holden M.T.G."/>
            <person name="Crossman L."/>
            <person name="Challis G.L."/>
            <person name="Churcher C."/>
            <person name="Mungall K."/>
            <person name="Brooks K."/>
            <person name="Chillingworth T."/>
            <person name="Feltwell T."/>
            <person name="Abdellah Z."/>
            <person name="Hauser H."/>
            <person name="Jagels K."/>
            <person name="Maddison M."/>
            <person name="Moule S."/>
            <person name="Sanders M."/>
            <person name="Whitehead S."/>
            <person name="Quail M.A."/>
            <person name="Dougan G."/>
            <person name="Parkhill J."/>
            <person name="Prentice M.B."/>
        </authorList>
    </citation>
    <scope>NUCLEOTIDE SEQUENCE [LARGE SCALE GENOMIC DNA]</scope>
    <source>
        <strain>NCTC 13174 / 8081</strain>
    </source>
</reference>
<gene>
    <name evidence="1" type="primary">mdtJ</name>
    <name type="ordered locus">YE2381</name>
</gene>
<protein>
    <recommendedName>
        <fullName evidence="1">Spermidine export protein MdtJ</fullName>
    </recommendedName>
</protein>
<sequence>MMIYWIFLGLAIVAEIIGTLSMKYASVSGELTGHIVMYFMITGSYIMLALAVKKVALGVAYALWEGIGILIITVFSVLWFDESLSPLKIAGLVTLVGGIMLVKSGTRKPKKPNSPNRNSGEHHATA</sequence>
<proteinExistence type="inferred from homology"/>
<keyword id="KW-0997">Cell inner membrane</keyword>
<keyword id="KW-1003">Cell membrane</keyword>
<keyword id="KW-0472">Membrane</keyword>
<keyword id="KW-0812">Transmembrane</keyword>
<keyword id="KW-1133">Transmembrane helix</keyword>
<keyword id="KW-0813">Transport</keyword>